<protein>
    <recommendedName>
        <fullName>UPF0488 protein C8orf33 homolog</fullName>
    </recommendedName>
</protein>
<proteinExistence type="evidence at transcript level"/>
<reference key="1">
    <citation type="submission" date="2006-01" db="EMBL/GenBank/DDBJ databases">
        <authorList>
            <consortium name="NIH - Mammalian Gene Collection (MGC) project"/>
        </authorList>
    </citation>
    <scope>NUCLEOTIDE SEQUENCE [LARGE SCALE MRNA]</scope>
    <source>
        <strain>Hereford</strain>
        <tissue>Hypothalamus</tissue>
    </source>
</reference>
<accession>Q2KID8</accession>
<comment type="similarity">
    <text evidence="3">Belongs to the UPF0488 family.</text>
</comment>
<name>CH033_BOVIN</name>
<dbReference type="EMBL" id="BC112675">
    <property type="protein sequence ID" value="AAI12676.1"/>
    <property type="molecule type" value="mRNA"/>
</dbReference>
<dbReference type="RefSeq" id="NP_001039618.1">
    <property type="nucleotide sequence ID" value="NM_001046153.2"/>
</dbReference>
<dbReference type="SMR" id="Q2KID8"/>
<dbReference type="FunCoup" id="Q2KID8">
    <property type="interactions" value="2883"/>
</dbReference>
<dbReference type="STRING" id="9913.ENSBTAP00000001168"/>
<dbReference type="PaxDb" id="9913-ENSBTAP00000001168"/>
<dbReference type="Ensembl" id="ENSBTAT00000001168.5">
    <property type="protein sequence ID" value="ENSBTAP00000001168.5"/>
    <property type="gene ID" value="ENSBTAG00000000879.6"/>
</dbReference>
<dbReference type="GeneID" id="513585"/>
<dbReference type="KEGG" id="bta:513585"/>
<dbReference type="CTD" id="513585"/>
<dbReference type="VEuPathDB" id="HostDB:ENSBTAG00000000879"/>
<dbReference type="eggNOG" id="ENOG502SBI9">
    <property type="taxonomic scope" value="Eukaryota"/>
</dbReference>
<dbReference type="GeneTree" id="ENSGT00390000000306"/>
<dbReference type="InParanoid" id="Q2KID8"/>
<dbReference type="OMA" id="CLCAGQP"/>
<dbReference type="OrthoDB" id="20277at2759"/>
<dbReference type="Proteomes" id="UP000009136">
    <property type="component" value="Chromosome 14"/>
</dbReference>
<dbReference type="Bgee" id="ENSBTAG00000000879">
    <property type="expression patterns" value="Expressed in tongue muscle and 107 other cell types or tissues"/>
</dbReference>
<dbReference type="InterPro" id="IPR029274">
    <property type="entry name" value="DUF4615"/>
</dbReference>
<dbReference type="PANTHER" id="PTHR13602">
    <property type="entry name" value="UPF0488 PROTEIN C8ORF33"/>
    <property type="match status" value="1"/>
</dbReference>
<dbReference type="PANTHER" id="PTHR13602:SF2">
    <property type="entry name" value="UPF0488 PROTEIN C8ORF33"/>
    <property type="match status" value="1"/>
</dbReference>
<dbReference type="Pfam" id="PF15393">
    <property type="entry name" value="DUF4615"/>
    <property type="match status" value="1"/>
</dbReference>
<keyword id="KW-0007">Acetylation</keyword>
<keyword id="KW-0597">Phosphoprotein</keyword>
<keyword id="KW-1185">Reference proteome</keyword>
<feature type="initiator methionine" description="Removed" evidence="1">
    <location>
        <position position="1"/>
    </location>
</feature>
<feature type="chain" id="PRO_0000304981" description="UPF0488 protein C8orf33 homolog">
    <location>
        <begin position="2"/>
        <end position="188"/>
    </location>
</feature>
<feature type="region of interest" description="Disordered" evidence="2">
    <location>
        <begin position="1"/>
        <end position="65"/>
    </location>
</feature>
<feature type="region of interest" description="Disordered" evidence="2">
    <location>
        <begin position="87"/>
        <end position="112"/>
    </location>
</feature>
<feature type="region of interest" description="Disordered" evidence="2">
    <location>
        <begin position="144"/>
        <end position="182"/>
    </location>
</feature>
<feature type="compositionally biased region" description="Basic and acidic residues" evidence="2">
    <location>
        <begin position="166"/>
        <end position="182"/>
    </location>
</feature>
<feature type="modified residue" description="N-acetylalanine" evidence="1">
    <location>
        <position position="2"/>
    </location>
</feature>
<feature type="modified residue" description="Phosphoserine" evidence="1">
    <location>
        <position position="41"/>
    </location>
</feature>
<evidence type="ECO:0000250" key="1">
    <source>
        <dbReference type="UniProtKB" id="Q9H7E9"/>
    </source>
</evidence>
<evidence type="ECO:0000256" key="2">
    <source>
        <dbReference type="SAM" id="MobiDB-lite"/>
    </source>
</evidence>
<evidence type="ECO:0000305" key="3"/>
<organism>
    <name type="scientific">Bos taurus</name>
    <name type="common">Bovine</name>
    <dbReference type="NCBI Taxonomy" id="9913"/>
    <lineage>
        <taxon>Eukaryota</taxon>
        <taxon>Metazoa</taxon>
        <taxon>Chordata</taxon>
        <taxon>Craniata</taxon>
        <taxon>Vertebrata</taxon>
        <taxon>Euteleostomi</taxon>
        <taxon>Mammalia</taxon>
        <taxon>Eutheria</taxon>
        <taxon>Laurasiatheria</taxon>
        <taxon>Artiodactyla</taxon>
        <taxon>Ruminantia</taxon>
        <taxon>Pecora</taxon>
        <taxon>Bovidae</taxon>
        <taxon>Bovinae</taxon>
        <taxon>Bos</taxon>
    </lineage>
</organism>
<sequence length="188" mass="20972">MAAPGRPARETAAAPGPGRPTCRDAASRTKKQKKKTRDGASVANGSGKTPEKQDPKEAPLSAEAQAEQLARELAWCVEKLELGLKMQRPTPKQKEQALGAIRTLRSQRTPLPRKRQLMRSLFGDYRAQIEAEWREALQALRTAAHSAQVQPVGEAARKKSRRVCRPRPEGRSKGTSDTRDEEFRFNFF</sequence>